<gene>
    <name evidence="1" type="primary">xerC</name>
    <name type="ordered locus">SAOUHSC_01224</name>
</gene>
<feature type="chain" id="PRO_1000070045" description="Tyrosine recombinase XerC">
    <location>
        <begin position="1"/>
        <end position="298"/>
    </location>
</feature>
<feature type="domain" description="Core-binding (CB)" evidence="3">
    <location>
        <begin position="1"/>
        <end position="84"/>
    </location>
</feature>
<feature type="domain" description="Tyr recombinase" evidence="2">
    <location>
        <begin position="105"/>
        <end position="286"/>
    </location>
</feature>
<feature type="active site" evidence="1">
    <location>
        <position position="145"/>
    </location>
</feature>
<feature type="active site" evidence="1">
    <location>
        <position position="169"/>
    </location>
</feature>
<feature type="active site" evidence="1">
    <location>
        <position position="238"/>
    </location>
</feature>
<feature type="active site" evidence="1">
    <location>
        <position position="241"/>
    </location>
</feature>
<feature type="active site" evidence="1">
    <location>
        <position position="264"/>
    </location>
</feature>
<feature type="active site" description="O-(3'-phospho-DNA)-tyrosine intermediate" evidence="1">
    <location>
        <position position="273"/>
    </location>
</feature>
<sequence>MNHIQDAFLNTLKVERNFSEHTLKSYQDDLIQFNQFLEQEHLELNTFEYRDARNYLSYLYSNHLKRTSVSRKISTLRTFYEYWMTLDENIINPFVQLVHPKKEKYLPQFFYEEEMEALFKTVEEDTSKNLRDRVILELLYATGIRVSELVNIKKQDIDFYANGVTVLGKGSKERFVPFGAYCRQSIENYLEHFKPIQSCNHDFLIVNMKGEAITERGVRYVLNDIVKRTAGVSEIHPHKLRHTFATHLLNQGADLRTVQSLLGHVNLSTTGKYTHVSNQQLRKVYLNAHPRAKKENET</sequence>
<protein>
    <recommendedName>
        <fullName evidence="1">Tyrosine recombinase XerC</fullName>
    </recommendedName>
</protein>
<name>XERC_STAA8</name>
<organism>
    <name type="scientific">Staphylococcus aureus (strain NCTC 8325 / PS 47)</name>
    <dbReference type="NCBI Taxonomy" id="93061"/>
    <lineage>
        <taxon>Bacteria</taxon>
        <taxon>Bacillati</taxon>
        <taxon>Bacillota</taxon>
        <taxon>Bacilli</taxon>
        <taxon>Bacillales</taxon>
        <taxon>Staphylococcaceae</taxon>
        <taxon>Staphylococcus</taxon>
    </lineage>
</organism>
<reference key="1">
    <citation type="book" date="2006" name="Gram positive pathogens, 2nd edition">
        <title>The Staphylococcus aureus NCTC 8325 genome.</title>
        <editorList>
            <person name="Fischetti V."/>
            <person name="Novick R."/>
            <person name="Ferretti J."/>
            <person name="Portnoy D."/>
            <person name="Rood J."/>
        </editorList>
        <authorList>
            <person name="Gillaspy A.F."/>
            <person name="Worrell V."/>
            <person name="Orvis J."/>
            <person name="Roe B.A."/>
            <person name="Dyer D.W."/>
            <person name="Iandolo J.J."/>
        </authorList>
    </citation>
    <scope>NUCLEOTIDE SEQUENCE [LARGE SCALE GENOMIC DNA]</scope>
    <source>
        <strain>NCTC 8325 / PS 47</strain>
    </source>
</reference>
<evidence type="ECO:0000255" key="1">
    <source>
        <dbReference type="HAMAP-Rule" id="MF_01808"/>
    </source>
</evidence>
<evidence type="ECO:0000255" key="2">
    <source>
        <dbReference type="PROSITE-ProRule" id="PRU01246"/>
    </source>
</evidence>
<evidence type="ECO:0000255" key="3">
    <source>
        <dbReference type="PROSITE-ProRule" id="PRU01248"/>
    </source>
</evidence>
<dbReference type="EMBL" id="CP000253">
    <property type="protein sequence ID" value="ABD30328.1"/>
    <property type="molecule type" value="Genomic_DNA"/>
</dbReference>
<dbReference type="RefSeq" id="WP_001015597.1">
    <property type="nucleotide sequence ID" value="NZ_LS483365.1"/>
</dbReference>
<dbReference type="RefSeq" id="YP_499760.1">
    <property type="nucleotide sequence ID" value="NC_007795.1"/>
</dbReference>
<dbReference type="SMR" id="Q2FZ30"/>
<dbReference type="STRING" id="93061.SAOUHSC_01224"/>
<dbReference type="PaxDb" id="1280-SAXN108_1254"/>
<dbReference type="GeneID" id="3920252"/>
<dbReference type="KEGG" id="sao:SAOUHSC_01224"/>
<dbReference type="PATRIC" id="fig|93061.5.peg.1122"/>
<dbReference type="eggNOG" id="COG4974">
    <property type="taxonomic scope" value="Bacteria"/>
</dbReference>
<dbReference type="HOGENOM" id="CLU_027562_9_0_9"/>
<dbReference type="OrthoDB" id="9801717at2"/>
<dbReference type="PRO" id="PR:Q2FZ30"/>
<dbReference type="Proteomes" id="UP000008816">
    <property type="component" value="Chromosome"/>
</dbReference>
<dbReference type="GO" id="GO:0005737">
    <property type="term" value="C:cytoplasm"/>
    <property type="evidence" value="ECO:0007669"/>
    <property type="project" value="UniProtKB-SubCell"/>
</dbReference>
<dbReference type="GO" id="GO:0003677">
    <property type="term" value="F:DNA binding"/>
    <property type="evidence" value="ECO:0007669"/>
    <property type="project" value="UniProtKB-KW"/>
</dbReference>
<dbReference type="GO" id="GO:0009009">
    <property type="term" value="F:site-specific recombinase activity"/>
    <property type="evidence" value="ECO:0000318"/>
    <property type="project" value="GO_Central"/>
</dbReference>
<dbReference type="GO" id="GO:0009037">
    <property type="term" value="F:tyrosine-based site-specific recombinase activity"/>
    <property type="evidence" value="ECO:0007669"/>
    <property type="project" value="UniProtKB-UniRule"/>
</dbReference>
<dbReference type="GO" id="GO:0051301">
    <property type="term" value="P:cell division"/>
    <property type="evidence" value="ECO:0007669"/>
    <property type="project" value="UniProtKB-KW"/>
</dbReference>
<dbReference type="GO" id="GO:0007059">
    <property type="term" value="P:chromosome segregation"/>
    <property type="evidence" value="ECO:0000318"/>
    <property type="project" value="GO_Central"/>
</dbReference>
<dbReference type="GO" id="GO:0006310">
    <property type="term" value="P:DNA recombination"/>
    <property type="evidence" value="ECO:0000318"/>
    <property type="project" value="GO_Central"/>
</dbReference>
<dbReference type="GO" id="GO:0006313">
    <property type="term" value="P:DNA transposition"/>
    <property type="evidence" value="ECO:0007669"/>
    <property type="project" value="UniProtKB-UniRule"/>
</dbReference>
<dbReference type="CDD" id="cd00798">
    <property type="entry name" value="INT_XerDC_C"/>
    <property type="match status" value="1"/>
</dbReference>
<dbReference type="Gene3D" id="1.10.150.130">
    <property type="match status" value="1"/>
</dbReference>
<dbReference type="Gene3D" id="1.10.443.10">
    <property type="entry name" value="Intergrase catalytic core"/>
    <property type="match status" value="1"/>
</dbReference>
<dbReference type="HAMAP" id="MF_01808">
    <property type="entry name" value="Recomb_XerC_XerD"/>
    <property type="match status" value="1"/>
</dbReference>
<dbReference type="InterPro" id="IPR044068">
    <property type="entry name" value="CB"/>
</dbReference>
<dbReference type="InterPro" id="IPR011010">
    <property type="entry name" value="DNA_brk_join_enz"/>
</dbReference>
<dbReference type="InterPro" id="IPR013762">
    <property type="entry name" value="Integrase-like_cat_sf"/>
</dbReference>
<dbReference type="InterPro" id="IPR002104">
    <property type="entry name" value="Integrase_catalytic"/>
</dbReference>
<dbReference type="InterPro" id="IPR010998">
    <property type="entry name" value="Integrase_recombinase_N"/>
</dbReference>
<dbReference type="InterPro" id="IPR004107">
    <property type="entry name" value="Integrase_SAM-like_N"/>
</dbReference>
<dbReference type="InterPro" id="IPR011931">
    <property type="entry name" value="Recomb_XerC"/>
</dbReference>
<dbReference type="InterPro" id="IPR023009">
    <property type="entry name" value="Tyrosine_recombinase_XerC/XerD"/>
</dbReference>
<dbReference type="InterPro" id="IPR050090">
    <property type="entry name" value="Tyrosine_recombinase_XerCD"/>
</dbReference>
<dbReference type="NCBIfam" id="NF001399">
    <property type="entry name" value="PRK00283.1"/>
    <property type="match status" value="1"/>
</dbReference>
<dbReference type="NCBIfam" id="NF040815">
    <property type="entry name" value="recomb_XerA_Arch"/>
    <property type="match status" value="1"/>
</dbReference>
<dbReference type="NCBIfam" id="TIGR02224">
    <property type="entry name" value="recomb_XerC"/>
    <property type="match status" value="1"/>
</dbReference>
<dbReference type="PANTHER" id="PTHR30349">
    <property type="entry name" value="PHAGE INTEGRASE-RELATED"/>
    <property type="match status" value="1"/>
</dbReference>
<dbReference type="PANTHER" id="PTHR30349:SF77">
    <property type="entry name" value="TYROSINE RECOMBINASE XERC"/>
    <property type="match status" value="1"/>
</dbReference>
<dbReference type="Pfam" id="PF02899">
    <property type="entry name" value="Phage_int_SAM_1"/>
    <property type="match status" value="1"/>
</dbReference>
<dbReference type="Pfam" id="PF00589">
    <property type="entry name" value="Phage_integrase"/>
    <property type="match status" value="1"/>
</dbReference>
<dbReference type="SUPFAM" id="SSF56349">
    <property type="entry name" value="DNA breaking-rejoining enzymes"/>
    <property type="match status" value="1"/>
</dbReference>
<dbReference type="PROSITE" id="PS51900">
    <property type="entry name" value="CB"/>
    <property type="match status" value="1"/>
</dbReference>
<dbReference type="PROSITE" id="PS51898">
    <property type="entry name" value="TYR_RECOMBINASE"/>
    <property type="match status" value="1"/>
</dbReference>
<proteinExistence type="inferred from homology"/>
<comment type="function">
    <text evidence="1">Site-specific tyrosine recombinase, which acts by catalyzing the cutting and rejoining of the recombining DNA molecules. The XerC-XerD complex is essential to convert dimers of the bacterial chromosome into monomers to permit their segregation at cell division. It also contributes to the segregational stability of plasmids.</text>
</comment>
<comment type="subunit">
    <text evidence="1">Forms a cyclic heterotetrameric complex composed of two molecules of XerC and two molecules of XerD.</text>
</comment>
<comment type="subcellular location">
    <subcellularLocation>
        <location evidence="1">Cytoplasm</location>
    </subcellularLocation>
</comment>
<comment type="similarity">
    <text evidence="1">Belongs to the 'phage' integrase family. XerC subfamily.</text>
</comment>
<accession>Q2FZ30</accession>
<keyword id="KW-0131">Cell cycle</keyword>
<keyword id="KW-0132">Cell division</keyword>
<keyword id="KW-0159">Chromosome partition</keyword>
<keyword id="KW-0963">Cytoplasm</keyword>
<keyword id="KW-0229">DNA integration</keyword>
<keyword id="KW-0233">DNA recombination</keyword>
<keyword id="KW-0238">DNA-binding</keyword>
<keyword id="KW-1185">Reference proteome</keyword>